<dbReference type="EC" id="4.2.1.19" evidence="1"/>
<dbReference type="EMBL" id="CP000612">
    <property type="protein sequence ID" value="ABO50863.1"/>
    <property type="molecule type" value="Genomic_DNA"/>
</dbReference>
<dbReference type="RefSeq" id="WP_011878661.1">
    <property type="nucleotide sequence ID" value="NC_009253.1"/>
</dbReference>
<dbReference type="SMR" id="A4J710"/>
<dbReference type="STRING" id="349161.Dred_2353"/>
<dbReference type="KEGG" id="drm:Dred_2353"/>
<dbReference type="eggNOG" id="COG0131">
    <property type="taxonomic scope" value="Bacteria"/>
</dbReference>
<dbReference type="HOGENOM" id="CLU_044308_3_0_9"/>
<dbReference type="OrthoDB" id="9790411at2"/>
<dbReference type="UniPathway" id="UPA00031">
    <property type="reaction ID" value="UER00011"/>
</dbReference>
<dbReference type="Proteomes" id="UP000001556">
    <property type="component" value="Chromosome"/>
</dbReference>
<dbReference type="GO" id="GO:0005737">
    <property type="term" value="C:cytoplasm"/>
    <property type="evidence" value="ECO:0007669"/>
    <property type="project" value="UniProtKB-SubCell"/>
</dbReference>
<dbReference type="GO" id="GO:0004424">
    <property type="term" value="F:imidazoleglycerol-phosphate dehydratase activity"/>
    <property type="evidence" value="ECO:0007669"/>
    <property type="project" value="UniProtKB-UniRule"/>
</dbReference>
<dbReference type="GO" id="GO:0000105">
    <property type="term" value="P:L-histidine biosynthetic process"/>
    <property type="evidence" value="ECO:0007669"/>
    <property type="project" value="UniProtKB-UniRule"/>
</dbReference>
<dbReference type="CDD" id="cd07914">
    <property type="entry name" value="IGPD"/>
    <property type="match status" value="1"/>
</dbReference>
<dbReference type="FunFam" id="3.30.230.40:FF:000001">
    <property type="entry name" value="Imidazoleglycerol-phosphate dehydratase HisB"/>
    <property type="match status" value="1"/>
</dbReference>
<dbReference type="FunFam" id="3.30.230.40:FF:000003">
    <property type="entry name" value="Imidazoleglycerol-phosphate dehydratase HisB"/>
    <property type="match status" value="1"/>
</dbReference>
<dbReference type="Gene3D" id="3.30.230.40">
    <property type="entry name" value="Imidazole glycerol phosphate dehydratase, domain 1"/>
    <property type="match status" value="2"/>
</dbReference>
<dbReference type="HAMAP" id="MF_00076">
    <property type="entry name" value="HisB"/>
    <property type="match status" value="1"/>
</dbReference>
<dbReference type="InterPro" id="IPR038494">
    <property type="entry name" value="IGPD_sf"/>
</dbReference>
<dbReference type="InterPro" id="IPR000807">
    <property type="entry name" value="ImidazoleglycerolP_deHydtase"/>
</dbReference>
<dbReference type="InterPro" id="IPR020565">
    <property type="entry name" value="ImidazoleglycerP_deHydtase_CS"/>
</dbReference>
<dbReference type="InterPro" id="IPR020568">
    <property type="entry name" value="Ribosomal_Su5_D2-typ_SF"/>
</dbReference>
<dbReference type="NCBIfam" id="NF002107">
    <property type="entry name" value="PRK00951.1-2"/>
    <property type="match status" value="1"/>
</dbReference>
<dbReference type="NCBIfam" id="NF002109">
    <property type="entry name" value="PRK00951.1-5"/>
    <property type="match status" value="1"/>
</dbReference>
<dbReference type="NCBIfam" id="NF002111">
    <property type="entry name" value="PRK00951.2-1"/>
    <property type="match status" value="1"/>
</dbReference>
<dbReference type="NCBIfam" id="NF002114">
    <property type="entry name" value="PRK00951.2-4"/>
    <property type="match status" value="1"/>
</dbReference>
<dbReference type="PANTHER" id="PTHR23133:SF2">
    <property type="entry name" value="IMIDAZOLEGLYCEROL-PHOSPHATE DEHYDRATASE"/>
    <property type="match status" value="1"/>
</dbReference>
<dbReference type="PANTHER" id="PTHR23133">
    <property type="entry name" value="IMIDAZOLEGLYCEROL-PHOSPHATE DEHYDRATASE HIS7"/>
    <property type="match status" value="1"/>
</dbReference>
<dbReference type="Pfam" id="PF00475">
    <property type="entry name" value="IGPD"/>
    <property type="match status" value="1"/>
</dbReference>
<dbReference type="SUPFAM" id="SSF54211">
    <property type="entry name" value="Ribosomal protein S5 domain 2-like"/>
    <property type="match status" value="2"/>
</dbReference>
<dbReference type="PROSITE" id="PS00954">
    <property type="entry name" value="IGP_DEHYDRATASE_1"/>
    <property type="match status" value="1"/>
</dbReference>
<dbReference type="PROSITE" id="PS00955">
    <property type="entry name" value="IGP_DEHYDRATASE_2"/>
    <property type="match status" value="1"/>
</dbReference>
<name>HIS7_DESRM</name>
<accession>A4J710</accession>
<organism>
    <name type="scientific">Desulforamulus reducens (strain ATCC BAA-1160 / DSM 100696 / MI-1)</name>
    <name type="common">Desulfotomaculum reducens</name>
    <dbReference type="NCBI Taxonomy" id="349161"/>
    <lineage>
        <taxon>Bacteria</taxon>
        <taxon>Bacillati</taxon>
        <taxon>Bacillota</taxon>
        <taxon>Clostridia</taxon>
        <taxon>Eubacteriales</taxon>
        <taxon>Peptococcaceae</taxon>
        <taxon>Desulforamulus</taxon>
    </lineage>
</organism>
<sequence>MLNRQAKFERKTSETDILVEVFLDGNGKYQVATGVGFFDHMLCLFAKHGALDLTVKAAGDTHIDDHHTVEDVGITLGQSIKQALGDKQGIVRYGHALVPMDESLILVALDMSGRGHLELDLPLPAAKVGNFDTELVEEFFRALALNCGMTLHVRMLSGRNTHHIIEGAFKALGRALRQAVSKDQRLTGIPSTKGVL</sequence>
<protein>
    <recommendedName>
        <fullName evidence="1">Imidazoleglycerol-phosphate dehydratase</fullName>
        <shortName evidence="1">IGPD</shortName>
        <ecNumber evidence="1">4.2.1.19</ecNumber>
    </recommendedName>
</protein>
<proteinExistence type="inferred from homology"/>
<comment type="catalytic activity">
    <reaction evidence="1">
        <text>D-erythro-1-(imidazol-4-yl)glycerol 3-phosphate = 3-(imidazol-4-yl)-2-oxopropyl phosphate + H2O</text>
        <dbReference type="Rhea" id="RHEA:11040"/>
        <dbReference type="ChEBI" id="CHEBI:15377"/>
        <dbReference type="ChEBI" id="CHEBI:57766"/>
        <dbReference type="ChEBI" id="CHEBI:58278"/>
        <dbReference type="EC" id="4.2.1.19"/>
    </reaction>
</comment>
<comment type="pathway">
    <text evidence="1">Amino-acid biosynthesis; L-histidine biosynthesis; L-histidine from 5-phospho-alpha-D-ribose 1-diphosphate: step 6/9.</text>
</comment>
<comment type="subcellular location">
    <subcellularLocation>
        <location evidence="1">Cytoplasm</location>
    </subcellularLocation>
</comment>
<comment type="similarity">
    <text evidence="1">Belongs to the imidazoleglycerol-phosphate dehydratase family.</text>
</comment>
<feature type="chain" id="PRO_0000336311" description="Imidazoleglycerol-phosphate dehydratase">
    <location>
        <begin position="1"/>
        <end position="196"/>
    </location>
</feature>
<evidence type="ECO:0000255" key="1">
    <source>
        <dbReference type="HAMAP-Rule" id="MF_00076"/>
    </source>
</evidence>
<keyword id="KW-0028">Amino-acid biosynthesis</keyword>
<keyword id="KW-0963">Cytoplasm</keyword>
<keyword id="KW-0368">Histidine biosynthesis</keyword>
<keyword id="KW-0456">Lyase</keyword>
<keyword id="KW-1185">Reference proteome</keyword>
<gene>
    <name evidence="1" type="primary">hisB</name>
    <name type="ordered locus">Dred_2353</name>
</gene>
<reference key="1">
    <citation type="submission" date="2007-03" db="EMBL/GenBank/DDBJ databases">
        <title>Complete sequence of Desulfotomaculum reducens MI-1.</title>
        <authorList>
            <consortium name="US DOE Joint Genome Institute"/>
            <person name="Copeland A."/>
            <person name="Lucas S."/>
            <person name="Lapidus A."/>
            <person name="Barry K."/>
            <person name="Detter J.C."/>
            <person name="Glavina del Rio T."/>
            <person name="Hammon N."/>
            <person name="Israni S."/>
            <person name="Dalin E."/>
            <person name="Tice H."/>
            <person name="Pitluck S."/>
            <person name="Sims D."/>
            <person name="Brettin T."/>
            <person name="Bruce D."/>
            <person name="Han C."/>
            <person name="Tapia R."/>
            <person name="Schmutz J."/>
            <person name="Larimer F."/>
            <person name="Land M."/>
            <person name="Hauser L."/>
            <person name="Kyrpides N."/>
            <person name="Kim E."/>
            <person name="Tebo B.M."/>
            <person name="Richardson P."/>
        </authorList>
    </citation>
    <scope>NUCLEOTIDE SEQUENCE [LARGE SCALE GENOMIC DNA]</scope>
    <source>
        <strain>ATCC BAA-1160 / DSM 100696 / MI-1</strain>
    </source>
</reference>